<evidence type="ECO:0000250" key="1"/>
<evidence type="ECO:0000255" key="2">
    <source>
        <dbReference type="PROSITE-ProRule" id="PRU01068"/>
    </source>
</evidence>
<evidence type="ECO:0000255" key="3">
    <source>
        <dbReference type="PROSITE-ProRule" id="PRU10099"/>
    </source>
</evidence>
<evidence type="ECO:0000255" key="4">
    <source>
        <dbReference type="PROSITE-ProRule" id="PRU10100"/>
    </source>
</evidence>
<evidence type="ECO:0000305" key="5"/>
<gene>
    <name type="primary">ansA</name>
</gene>
<organism>
    <name type="scientific">Bacillus licheniformis</name>
    <dbReference type="NCBI Taxonomy" id="1402"/>
    <lineage>
        <taxon>Bacteria</taxon>
        <taxon>Bacillati</taxon>
        <taxon>Bacillota</taxon>
        <taxon>Bacilli</taxon>
        <taxon>Bacillales</taxon>
        <taxon>Bacillaceae</taxon>
        <taxon>Bacillus</taxon>
    </lineage>
</organism>
<comment type="catalytic activity">
    <reaction>
        <text>L-asparagine + H2O = L-aspartate + NH4(+)</text>
        <dbReference type="Rhea" id="RHEA:21016"/>
        <dbReference type="ChEBI" id="CHEBI:15377"/>
        <dbReference type="ChEBI" id="CHEBI:28938"/>
        <dbReference type="ChEBI" id="CHEBI:29991"/>
        <dbReference type="ChEBI" id="CHEBI:58048"/>
        <dbReference type="EC" id="3.5.1.1"/>
    </reaction>
</comment>
<comment type="subunit">
    <text evidence="1">Homotetramer.</text>
</comment>
<comment type="subcellular location">
    <subcellularLocation>
        <location>Cytoplasm</location>
    </subcellularLocation>
</comment>
<comment type="similarity">
    <text evidence="5">Belongs to the asparaginase 1 family.</text>
</comment>
<protein>
    <recommendedName>
        <fullName>L-asparaginase</fullName>
        <shortName>L-ASNase</shortName>
        <ecNumber>3.5.1.1</ecNumber>
    </recommendedName>
    <alternativeName>
        <fullName>L-asparagine amidohydrolase</fullName>
    </alternativeName>
</protein>
<dbReference type="EC" id="3.5.1.1"/>
<dbReference type="EMBL" id="Z11497">
    <property type="protein sequence ID" value="CAA77574.1"/>
    <property type="molecule type" value="Genomic_DNA"/>
</dbReference>
<dbReference type="PIR" id="S18999">
    <property type="entry name" value="S18999"/>
</dbReference>
<dbReference type="SMR" id="P30363"/>
<dbReference type="GO" id="GO:0005737">
    <property type="term" value="C:cytoplasm"/>
    <property type="evidence" value="ECO:0007669"/>
    <property type="project" value="UniProtKB-SubCell"/>
</dbReference>
<dbReference type="GO" id="GO:0004067">
    <property type="term" value="F:asparaginase activity"/>
    <property type="evidence" value="ECO:0007669"/>
    <property type="project" value="UniProtKB-EC"/>
</dbReference>
<dbReference type="GO" id="GO:0006528">
    <property type="term" value="P:asparagine metabolic process"/>
    <property type="evidence" value="ECO:0007669"/>
    <property type="project" value="InterPro"/>
</dbReference>
<dbReference type="CDD" id="cd08964">
    <property type="entry name" value="L-asparaginase_II"/>
    <property type="match status" value="1"/>
</dbReference>
<dbReference type="FunFam" id="3.40.50.1170:FF:000001">
    <property type="entry name" value="L-asparaginase 2"/>
    <property type="match status" value="1"/>
</dbReference>
<dbReference type="Gene3D" id="3.40.50.40">
    <property type="match status" value="1"/>
</dbReference>
<dbReference type="Gene3D" id="3.40.50.1170">
    <property type="entry name" value="L-asparaginase, N-terminal domain"/>
    <property type="match status" value="1"/>
</dbReference>
<dbReference type="InterPro" id="IPR004550">
    <property type="entry name" value="AsnASE_II"/>
</dbReference>
<dbReference type="InterPro" id="IPR036152">
    <property type="entry name" value="Asp/glu_Ase-like_sf"/>
</dbReference>
<dbReference type="InterPro" id="IPR006034">
    <property type="entry name" value="Asparaginase/glutaminase-like"/>
</dbReference>
<dbReference type="InterPro" id="IPR020827">
    <property type="entry name" value="Asparaginase/glutaminase_AS1"/>
</dbReference>
<dbReference type="InterPro" id="IPR027475">
    <property type="entry name" value="Asparaginase/glutaminase_AS2"/>
</dbReference>
<dbReference type="InterPro" id="IPR040919">
    <property type="entry name" value="Asparaginase_C"/>
</dbReference>
<dbReference type="InterPro" id="IPR027473">
    <property type="entry name" value="L-asparaginase_C"/>
</dbReference>
<dbReference type="InterPro" id="IPR027474">
    <property type="entry name" value="L-asparaginase_N"/>
</dbReference>
<dbReference type="InterPro" id="IPR037152">
    <property type="entry name" value="L-asparaginase_N_sf"/>
</dbReference>
<dbReference type="PANTHER" id="PTHR11707:SF28">
    <property type="entry name" value="60 KDA LYSOPHOSPHOLIPASE"/>
    <property type="match status" value="1"/>
</dbReference>
<dbReference type="PANTHER" id="PTHR11707">
    <property type="entry name" value="L-ASPARAGINASE"/>
    <property type="match status" value="1"/>
</dbReference>
<dbReference type="Pfam" id="PF00710">
    <property type="entry name" value="Asparaginase"/>
    <property type="match status" value="1"/>
</dbReference>
<dbReference type="Pfam" id="PF17763">
    <property type="entry name" value="Asparaginase_C"/>
    <property type="match status" value="1"/>
</dbReference>
<dbReference type="PIRSF" id="PIRSF001220">
    <property type="entry name" value="L-ASNase_gatD"/>
    <property type="match status" value="1"/>
</dbReference>
<dbReference type="PIRSF" id="PIRSF500176">
    <property type="entry name" value="L_ASNase"/>
    <property type="match status" value="1"/>
</dbReference>
<dbReference type="PRINTS" id="PR00139">
    <property type="entry name" value="ASNGLNASE"/>
</dbReference>
<dbReference type="SFLD" id="SFLDS00057">
    <property type="entry name" value="Glutaminase/Asparaginase"/>
    <property type="match status" value="1"/>
</dbReference>
<dbReference type="SMART" id="SM00870">
    <property type="entry name" value="Asparaginase"/>
    <property type="match status" value="1"/>
</dbReference>
<dbReference type="SUPFAM" id="SSF53774">
    <property type="entry name" value="Glutaminase/Asparaginase"/>
    <property type="match status" value="1"/>
</dbReference>
<dbReference type="PROSITE" id="PS00144">
    <property type="entry name" value="ASN_GLN_ASE_1"/>
    <property type="match status" value="1"/>
</dbReference>
<dbReference type="PROSITE" id="PS00917">
    <property type="entry name" value="ASN_GLN_ASE_2"/>
    <property type="match status" value="1"/>
</dbReference>
<dbReference type="PROSITE" id="PS51732">
    <property type="entry name" value="ASN_GLN_ASE_3"/>
    <property type="match status" value="1"/>
</dbReference>
<keyword id="KW-0963">Cytoplasm</keyword>
<keyword id="KW-0378">Hydrolase</keyword>
<name>ASPG_BACLI</name>
<feature type="chain" id="PRO_0000171076" description="L-asparaginase">
    <location>
        <begin position="1"/>
        <end position="322"/>
    </location>
</feature>
<feature type="domain" description="Asparaginase/glutaminase" evidence="2">
    <location>
        <begin position="3"/>
        <end position="322"/>
    </location>
</feature>
<feature type="active site" description="O-isoaspartyl threonine intermediate" evidence="3 4">
    <location>
        <position position="13"/>
    </location>
</feature>
<feature type="binding site" evidence="1">
    <location>
        <position position="56"/>
    </location>
    <ligand>
        <name>substrate</name>
    </ligand>
</feature>
<feature type="binding site" evidence="1">
    <location>
        <begin position="89"/>
        <end position="90"/>
    </location>
    <ligand>
        <name>substrate</name>
    </ligand>
</feature>
<proteinExistence type="inferred from homology"/>
<reference key="1">
    <citation type="journal article" date="1991" name="FEMS Microbiol. Lett.">
        <title>Lack of specific hybridization between the lep genes of Salmonella typhimurium and Bacillus licheniformis.</title>
        <authorList>
            <person name="van Dijl J.M."/>
            <person name="de Jong A."/>
            <person name="Smith H."/>
            <person name="Bron S."/>
            <person name="Venema G."/>
        </authorList>
    </citation>
    <scope>NUCLEOTIDE SEQUENCE [GENOMIC DNA]</scope>
</reference>
<accession>P30363</accession>
<sequence>MNKKVALITTGGTIASRKTESGRLAAGAISGPELAEMCSLPEDVQIDVYPAFQLPSMHITFQHLLELKQTIERVFQDGGYDGAVVTHGTDTLEETAYFLDLTIEDERPVVVTGSQRAPEQQGTDAYTNIRHAVYTACSPDIKGAGTVVVFNERIFNARYVKKVHASNLQGFDVFGFGYLGIIDNDKVYVYQKLLKRDVHQLQRPLPAVDIVKCYLDGDGKFIRAAVREGVEGIVLEGVGRGQVPPNMMADIEQALNQGVYIVITTSAEEGEVYTTYDYAGSSYDLAKKGVILGKDYDSKKARMKLAVLLASYKEGIKDKFCY</sequence>